<organism>
    <name type="scientific">Rana temporaria</name>
    <name type="common">European common frog</name>
    <dbReference type="NCBI Taxonomy" id="8407"/>
    <lineage>
        <taxon>Eukaryota</taxon>
        <taxon>Metazoa</taxon>
        <taxon>Chordata</taxon>
        <taxon>Craniata</taxon>
        <taxon>Vertebrata</taxon>
        <taxon>Euteleostomi</taxon>
        <taxon>Amphibia</taxon>
        <taxon>Batrachia</taxon>
        <taxon>Anura</taxon>
        <taxon>Neobatrachia</taxon>
        <taxon>Ranoidea</taxon>
        <taxon>Ranidae</taxon>
        <taxon>Rana</taxon>
        <taxon>Rana</taxon>
    </lineage>
</organism>
<protein>
    <recommendedName>
        <fullName>Brevinin-2Tb</fullName>
    </recommendedName>
</protein>
<name>BR2B_RANTE</name>
<keyword id="KW-0878">Amphibian defense peptide</keyword>
<keyword id="KW-0044">Antibiotic</keyword>
<keyword id="KW-0929">Antimicrobial</keyword>
<keyword id="KW-0165">Cleavage on pair of basic residues</keyword>
<keyword id="KW-0903">Direct protein sequencing</keyword>
<keyword id="KW-1015">Disulfide bond</keyword>
<keyword id="KW-0964">Secreted</keyword>
<keyword id="KW-0732">Signal</keyword>
<comment type="function">
    <text evidence="1">Antimicrobial peptide.</text>
</comment>
<comment type="subcellular location">
    <subcellularLocation>
        <location>Secreted</location>
    </subcellularLocation>
</comment>
<comment type="tissue specificity">
    <text>Expressed by the skin glands.</text>
</comment>
<comment type="similarity">
    <text evidence="3">Belongs to the frog skin active peptide (FSAP) family. Brevinin subfamily.</text>
</comment>
<proteinExistence type="evidence at protein level"/>
<dbReference type="EMBL" id="AJ251566">
    <property type="protein sequence ID" value="CAB61445.1"/>
    <property type="molecule type" value="mRNA"/>
</dbReference>
<dbReference type="SMR" id="P82269"/>
<dbReference type="GO" id="GO:0005576">
    <property type="term" value="C:extracellular region"/>
    <property type="evidence" value="ECO:0007669"/>
    <property type="project" value="UniProtKB-SubCell"/>
</dbReference>
<dbReference type="GO" id="GO:0042742">
    <property type="term" value="P:defense response to bacterium"/>
    <property type="evidence" value="ECO:0007669"/>
    <property type="project" value="UniProtKB-KW"/>
</dbReference>
<dbReference type="InterPro" id="IPR012521">
    <property type="entry name" value="Antimicrobial_frog_2"/>
</dbReference>
<dbReference type="InterPro" id="IPR004275">
    <property type="entry name" value="Frog_antimicrobial_propeptide"/>
</dbReference>
<dbReference type="Pfam" id="PF08023">
    <property type="entry name" value="Antimicrobial_2"/>
    <property type="match status" value="1"/>
</dbReference>
<dbReference type="Pfam" id="PF03032">
    <property type="entry name" value="FSAP_sig_propep"/>
    <property type="match status" value="1"/>
</dbReference>
<sequence length="74" mass="8193">MFTMKKSLLLFFFLGTISLSLCQEERNADEDDGEMTEEEKRGILDTLKHLAKTAGKGALQSLLNHASCKLSGQC</sequence>
<evidence type="ECO:0000250" key="1"/>
<evidence type="ECO:0000255" key="2"/>
<evidence type="ECO:0000305" key="3"/>
<feature type="signal peptide" evidence="2">
    <location>
        <begin position="1"/>
        <end position="22"/>
    </location>
</feature>
<feature type="propeptide" id="PRO_0000003451">
    <location>
        <begin position="23"/>
        <end position="40"/>
    </location>
</feature>
<feature type="peptide" id="PRO_0000003452" description="Brevinin-2Tb">
    <location>
        <begin position="42"/>
        <end position="74"/>
    </location>
</feature>
<feature type="disulfide bond" evidence="1">
    <location>
        <begin position="68"/>
        <end position="74"/>
    </location>
</feature>
<accession>P82269</accession>
<reference key="1">
    <citation type="journal article" date="1998" name="Biopolymers">
        <title>Antimicrobial peptides from amphibian skin: what do they tell us?</title>
        <authorList>
            <person name="Simmaco M."/>
            <person name="Mignogna G."/>
            <person name="Barra D."/>
        </authorList>
    </citation>
    <scope>NUCLEOTIDE SEQUENCE [MRNA]</scope>
    <scope>PROTEIN SEQUENCE OF 42-74</scope>
    <source>
        <tissue>Skin</tissue>
        <tissue>Skin secretion</tissue>
    </source>
</reference>